<organism>
    <name type="scientific">Meyerozyma guilliermondii (strain ATCC 6260 / CBS 566 / DSM 6381 / JCM 1539 / NBRC 10279 / NRRL Y-324)</name>
    <name type="common">Yeast</name>
    <name type="synonym">Candida guilliermondii</name>
    <dbReference type="NCBI Taxonomy" id="294746"/>
    <lineage>
        <taxon>Eukaryota</taxon>
        <taxon>Fungi</taxon>
        <taxon>Dikarya</taxon>
        <taxon>Ascomycota</taxon>
        <taxon>Saccharomycotina</taxon>
        <taxon>Pichiomycetes</taxon>
        <taxon>Debaryomycetaceae</taxon>
        <taxon>Meyerozyma</taxon>
    </lineage>
</organism>
<dbReference type="EMBL" id="CH408156">
    <property type="protein sequence ID" value="EDK37404.2"/>
    <property type="molecule type" value="Genomic_DNA"/>
</dbReference>
<dbReference type="RefSeq" id="XP_001485831.1">
    <property type="nucleotide sequence ID" value="XM_001485781.1"/>
</dbReference>
<dbReference type="SMR" id="A5DE01"/>
<dbReference type="FunCoup" id="A5DE01">
    <property type="interactions" value="76"/>
</dbReference>
<dbReference type="STRING" id="294746.A5DE01"/>
<dbReference type="GeneID" id="5127456"/>
<dbReference type="KEGG" id="pgu:PGUG_01502"/>
<dbReference type="VEuPathDB" id="FungiDB:PGUG_01502"/>
<dbReference type="eggNOG" id="ENOG502QVJJ">
    <property type="taxonomic scope" value="Eukaryota"/>
</dbReference>
<dbReference type="HOGENOM" id="CLU_089705_0_0_1"/>
<dbReference type="InParanoid" id="A5DE01"/>
<dbReference type="OMA" id="NKGNAID"/>
<dbReference type="OrthoDB" id="29460at2759"/>
<dbReference type="Proteomes" id="UP000001997">
    <property type="component" value="Unassembled WGS sequence"/>
</dbReference>
<dbReference type="GO" id="GO:0030659">
    <property type="term" value="C:cytoplasmic vesicle membrane"/>
    <property type="evidence" value="ECO:0007669"/>
    <property type="project" value="UniProtKB-SubCell"/>
</dbReference>
<dbReference type="GO" id="GO:0000139">
    <property type="term" value="C:Golgi membrane"/>
    <property type="evidence" value="ECO:0007669"/>
    <property type="project" value="UniProtKB-SubCell"/>
</dbReference>
<dbReference type="GO" id="GO:0031966">
    <property type="term" value="C:mitochondrial membrane"/>
    <property type="evidence" value="ECO:0007669"/>
    <property type="project" value="UniProtKB-SubCell"/>
</dbReference>
<dbReference type="GO" id="GO:0034045">
    <property type="term" value="C:phagophore assembly site membrane"/>
    <property type="evidence" value="ECO:0007669"/>
    <property type="project" value="UniProtKB-SubCell"/>
</dbReference>
<dbReference type="GO" id="GO:0006914">
    <property type="term" value="P:autophagy"/>
    <property type="evidence" value="ECO:0007669"/>
    <property type="project" value="UniProtKB-KW"/>
</dbReference>
<dbReference type="GO" id="GO:0015031">
    <property type="term" value="P:protein transport"/>
    <property type="evidence" value="ECO:0007669"/>
    <property type="project" value="UniProtKB-KW"/>
</dbReference>
<dbReference type="Gene3D" id="2.70.130.10">
    <property type="entry name" value="Mannose-6-phosphate receptor binding domain"/>
    <property type="match status" value="1"/>
</dbReference>
<dbReference type="InterPro" id="IPR018939">
    <property type="entry name" value="Autophagy-rel_prot_27"/>
</dbReference>
<dbReference type="InterPro" id="IPR009011">
    <property type="entry name" value="Man6P_isomerase_rcpt-bd_dom_sf"/>
</dbReference>
<dbReference type="InterPro" id="IPR044865">
    <property type="entry name" value="MRH_dom"/>
</dbReference>
<dbReference type="PANTHER" id="PTHR15071:SF13">
    <property type="entry name" value="AUTOPHAGY-RELATED PROTEIN 27"/>
    <property type="match status" value="1"/>
</dbReference>
<dbReference type="PANTHER" id="PTHR15071">
    <property type="entry name" value="MANNOSE-6-PHOSPHATE RECEPTOR FAMILY MEMBER"/>
    <property type="match status" value="1"/>
</dbReference>
<dbReference type="Pfam" id="PF09451">
    <property type="entry name" value="ATG27"/>
    <property type="match status" value="1"/>
</dbReference>
<dbReference type="SUPFAM" id="SSF50911">
    <property type="entry name" value="Mannose 6-phosphate receptor domain"/>
    <property type="match status" value="1"/>
</dbReference>
<dbReference type="PROSITE" id="PS51914">
    <property type="entry name" value="MRH"/>
    <property type="match status" value="1"/>
</dbReference>
<gene>
    <name type="primary">ATG27</name>
    <name type="ORF">PGUG_01502</name>
</gene>
<reference key="1">
    <citation type="journal article" date="2009" name="Nature">
        <title>Evolution of pathogenicity and sexual reproduction in eight Candida genomes.</title>
        <authorList>
            <person name="Butler G."/>
            <person name="Rasmussen M.D."/>
            <person name="Lin M.F."/>
            <person name="Santos M.A.S."/>
            <person name="Sakthikumar S."/>
            <person name="Munro C.A."/>
            <person name="Rheinbay E."/>
            <person name="Grabherr M."/>
            <person name="Forche A."/>
            <person name="Reedy J.L."/>
            <person name="Agrafioti I."/>
            <person name="Arnaud M.B."/>
            <person name="Bates S."/>
            <person name="Brown A.J.P."/>
            <person name="Brunke S."/>
            <person name="Costanzo M.C."/>
            <person name="Fitzpatrick D.A."/>
            <person name="de Groot P.W.J."/>
            <person name="Harris D."/>
            <person name="Hoyer L.L."/>
            <person name="Hube B."/>
            <person name="Klis F.M."/>
            <person name="Kodira C."/>
            <person name="Lennard N."/>
            <person name="Logue M.E."/>
            <person name="Martin R."/>
            <person name="Neiman A.M."/>
            <person name="Nikolaou E."/>
            <person name="Quail M.A."/>
            <person name="Quinn J."/>
            <person name="Santos M.C."/>
            <person name="Schmitzberger F.F."/>
            <person name="Sherlock G."/>
            <person name="Shah P."/>
            <person name="Silverstein K.A.T."/>
            <person name="Skrzypek M.S."/>
            <person name="Soll D."/>
            <person name="Staggs R."/>
            <person name="Stansfield I."/>
            <person name="Stumpf M.P.H."/>
            <person name="Sudbery P.E."/>
            <person name="Srikantha T."/>
            <person name="Zeng Q."/>
            <person name="Berman J."/>
            <person name="Berriman M."/>
            <person name="Heitman J."/>
            <person name="Gow N.A.R."/>
            <person name="Lorenz M.C."/>
            <person name="Birren B.W."/>
            <person name="Kellis M."/>
            <person name="Cuomo C.A."/>
        </authorList>
    </citation>
    <scope>NUCLEOTIDE SEQUENCE [LARGE SCALE GENOMIC DNA]</scope>
    <source>
        <strain>ATCC 6260 / CBS 566 / DSM 6381 / JCM 1539 / NBRC 10279 / NRRL Y-324</strain>
    </source>
</reference>
<name>ATG27_PICGU</name>
<feature type="signal peptide" evidence="2">
    <location>
        <begin position="1"/>
        <end position="15"/>
    </location>
</feature>
<feature type="chain" id="PRO_0000318053" description="Autophagy-related protein 27">
    <location>
        <begin position="16"/>
        <end position="259"/>
    </location>
</feature>
<feature type="topological domain" description="Lumenal" evidence="1">
    <location>
        <begin position="16"/>
        <end position="184"/>
    </location>
</feature>
<feature type="transmembrane region" description="Helical" evidence="2">
    <location>
        <begin position="185"/>
        <end position="205"/>
    </location>
</feature>
<feature type="topological domain" description="Cytoplasmic" evidence="1">
    <location>
        <begin position="206"/>
        <end position="259"/>
    </location>
</feature>
<feature type="domain" description="MRH" evidence="3">
    <location>
        <begin position="16"/>
        <end position="167"/>
    </location>
</feature>
<feature type="disulfide bond" evidence="3">
    <location>
        <begin position="18"/>
        <end position="57"/>
    </location>
</feature>
<feature type="disulfide bond" evidence="3">
    <location>
        <begin position="68"/>
        <end position="75"/>
    </location>
</feature>
<feature type="disulfide bond" evidence="3">
    <location>
        <begin position="135"/>
        <end position="165"/>
    </location>
</feature>
<comment type="function">
    <text evidence="1">Effector of VPS34 phosphatidylinositol 3-phosphate kinase signaling. Regulates the cytoplasm to vacuole transport (Cvt) vesicle formation. Plays a role in ATG protein retrieval from the pre-autophagosomal structure (PAS) and is especially required for autophagy-dependent cycling of ATG9 (By similarity).</text>
</comment>
<comment type="subcellular location">
    <subcellularLocation>
        <location evidence="1">Cytoplasmic vesicle membrane</location>
        <topology evidence="1">Single-pass type I membrane protein</topology>
    </subcellularLocation>
    <subcellularLocation>
        <location evidence="1">Golgi apparatus membrane</location>
        <topology evidence="1">Single-pass type I membrane protein</topology>
    </subcellularLocation>
    <subcellularLocation>
        <location evidence="1">Mitochondrion membrane</location>
        <topology evidence="1">Single-pass membrane protein</topology>
    </subcellularLocation>
    <subcellularLocation>
        <location evidence="1">Preautophagosomal structure membrane</location>
        <topology evidence="1">Single-pass type I membrane protein</topology>
    </subcellularLocation>
    <text evidence="1">Cycles among the pre-autophagosomal structure (PAS), mitochondria and Golgi.</text>
</comment>
<comment type="similarity">
    <text evidence="4">Belongs to the ATG27 family.</text>
</comment>
<keyword id="KW-0072">Autophagy</keyword>
<keyword id="KW-0968">Cytoplasmic vesicle</keyword>
<keyword id="KW-1015">Disulfide bond</keyword>
<keyword id="KW-0333">Golgi apparatus</keyword>
<keyword id="KW-0472">Membrane</keyword>
<keyword id="KW-0496">Mitochondrion</keyword>
<keyword id="KW-0653">Protein transport</keyword>
<keyword id="KW-1185">Reference proteome</keyword>
<keyword id="KW-0732">Signal</keyword>
<keyword id="KW-0812">Transmembrane</keyword>
<keyword id="KW-1133">Transmembrane helix</keyword>
<keyword id="KW-0813">Transport</keyword>
<accession>A5DE01</accession>
<proteinExistence type="inferred from homology"/>
<protein>
    <recommendedName>
        <fullName>Autophagy-related protein 27</fullName>
    </recommendedName>
</protein>
<sequence length="259" mass="29027">MWFPILTWLVATAVALDCSAKDLDSYNFALLQGTHAVESVKDTPPSTTKTTWYFGICESVSSKKAPACPKNVDICGVTEVKVDKDYIVTQVVGFNSNLEKKYTPVESKNENGIKISYKGANWGSSLVNAEVYYICAEDKDGDDTFTVESWDDEMLFAQVKSKAACVTSKDDKKKPKKPEDNGESWGWFTWIFIFMVLFLSIYIIGGAWFQYNKGNAIDFQSALREVLENFVDLVRGLPSFIREIIEKVTGSNRGEYSAV</sequence>
<evidence type="ECO:0000250" key="1"/>
<evidence type="ECO:0000255" key="2"/>
<evidence type="ECO:0000255" key="3">
    <source>
        <dbReference type="PROSITE-ProRule" id="PRU01262"/>
    </source>
</evidence>
<evidence type="ECO:0000305" key="4"/>